<sequence length="9" mass="1000">QGLIAFPRV</sequence>
<organism>
    <name type="scientific">Chroicoptera sp. (strain Kasungu)</name>
    <name type="common">Praying mantis</name>
    <dbReference type="NCBI Taxonomy" id="765341"/>
    <lineage>
        <taxon>Eukaryota</taxon>
        <taxon>Metazoa</taxon>
        <taxon>Ecdysozoa</taxon>
        <taxon>Arthropoda</taxon>
        <taxon>Hexapoda</taxon>
        <taxon>Insecta</taxon>
        <taxon>Pterygota</taxon>
        <taxon>Neoptera</taxon>
        <taxon>Polyneoptera</taxon>
        <taxon>Dictyoptera</taxon>
        <taxon>Mantodea</taxon>
        <taxon>Eumantodea</taxon>
        <taxon>Chroicopteroidea</taxon>
        <taxon>Chroicopteridae</taxon>
        <taxon>Chroicopterinae</taxon>
        <taxon>Chroicoptera</taxon>
    </lineage>
</organism>
<evidence type="ECO:0000250" key="1">
    <source>
        <dbReference type="UniProtKB" id="P83923"/>
    </source>
</evidence>
<evidence type="ECO:0000250" key="2">
    <source>
        <dbReference type="UniProtKB" id="P84375"/>
    </source>
</evidence>
<evidence type="ECO:0000255" key="3"/>
<evidence type="ECO:0000269" key="4">
    <source>
    </source>
</evidence>
<evidence type="ECO:0000303" key="5">
    <source>
    </source>
</evidence>
<evidence type="ECO:0000305" key="6"/>
<keyword id="KW-0027">Amidation</keyword>
<keyword id="KW-0903">Direct protein sequencing</keyword>
<keyword id="KW-0527">Neuropeptide</keyword>
<keyword id="KW-0873">Pyrrolidone carboxylic acid</keyword>
<keyword id="KW-0964">Secreted</keyword>
<dbReference type="GO" id="GO:0005576">
    <property type="term" value="C:extracellular region"/>
    <property type="evidence" value="ECO:0007669"/>
    <property type="project" value="UniProtKB-SubCell"/>
</dbReference>
<dbReference type="GO" id="GO:0007218">
    <property type="term" value="P:neuropeptide signaling pathway"/>
    <property type="evidence" value="ECO:0007669"/>
    <property type="project" value="UniProtKB-KW"/>
</dbReference>
<dbReference type="InterPro" id="IPR013231">
    <property type="entry name" value="Periviscerokinin"/>
</dbReference>
<dbReference type="Pfam" id="PF08259">
    <property type="entry name" value="Periviscerokin"/>
    <property type="match status" value="1"/>
</dbReference>
<proteinExistence type="evidence at protein level"/>
<reference evidence="6" key="1">
    <citation type="journal article" date="2010" name="Peptides">
        <title>CAPA-peptides of praying mantids (Mantodea).</title>
        <authorList>
            <person name="Koehler R."/>
            <person name="Predel R."/>
        </authorList>
    </citation>
    <scope>PROTEIN SEQUENCE</scope>
    <scope>MASS SPECTROMETRY</scope>
    <scope>PYROGLUTAMATE FORMATION AT GLN-1</scope>
    <scope>AMIDATION AT VAL-9</scope>
    <source>
        <tissue evidence="4">Abdominal perisympathetic organs</tissue>
    </source>
</reference>
<protein>
    <recommendedName>
        <fullName evidence="5">Periviscerokinin-1</fullName>
    </recommendedName>
</protein>
<name>PVK1_CHRSK</name>
<comment type="function">
    <text evidence="1">Mediates visceral muscle contractile activity (myotropic activity).</text>
</comment>
<comment type="subcellular location">
    <subcellularLocation>
        <location evidence="2">Secreted</location>
    </subcellularLocation>
</comment>
<comment type="mass spectrometry" mass="999.6" method="MALDI" evidence="4"/>
<comment type="mass spectrometry" mass="982.6" method="MALDI" evidence="4">
    <text>With pyroglutamate at Gln-1.</text>
</comment>
<comment type="similarity">
    <text evidence="3">Belongs to the periviscerokinin family.</text>
</comment>
<accession>P86646</accession>
<feature type="peptide" id="PRO_0000395563" description="Periviscerokinin-1" evidence="4">
    <location>
        <begin position="1"/>
        <end position="9"/>
    </location>
</feature>
<feature type="modified residue" description="Pyrrolidone carboxylic acid; partial" evidence="4">
    <location>
        <position position="1"/>
    </location>
</feature>
<feature type="modified residue" description="Valine amide" evidence="4">
    <location>
        <position position="9"/>
    </location>
</feature>
<feature type="unsure residue" description="L or I" evidence="4">
    <location>
        <position position="3"/>
    </location>
</feature>
<feature type="unsure residue" description="I or L" evidence="4">
    <location>
        <position position="4"/>
    </location>
</feature>